<evidence type="ECO:0000255" key="1">
    <source>
        <dbReference type="HAMAP-Rule" id="MF_00475"/>
    </source>
</evidence>
<reference key="1">
    <citation type="journal article" date="2009" name="PLoS Genet.">
        <title>Organised genome dynamics in the Escherichia coli species results in highly diverse adaptive paths.</title>
        <authorList>
            <person name="Touchon M."/>
            <person name="Hoede C."/>
            <person name="Tenaillon O."/>
            <person name="Barbe V."/>
            <person name="Baeriswyl S."/>
            <person name="Bidet P."/>
            <person name="Bingen E."/>
            <person name="Bonacorsi S."/>
            <person name="Bouchier C."/>
            <person name="Bouvet O."/>
            <person name="Calteau A."/>
            <person name="Chiapello H."/>
            <person name="Clermont O."/>
            <person name="Cruveiller S."/>
            <person name="Danchin A."/>
            <person name="Diard M."/>
            <person name="Dossat C."/>
            <person name="Karoui M.E."/>
            <person name="Frapy E."/>
            <person name="Garry L."/>
            <person name="Ghigo J.M."/>
            <person name="Gilles A.M."/>
            <person name="Johnson J."/>
            <person name="Le Bouguenec C."/>
            <person name="Lescat M."/>
            <person name="Mangenot S."/>
            <person name="Martinez-Jehanne V."/>
            <person name="Matic I."/>
            <person name="Nassif X."/>
            <person name="Oztas S."/>
            <person name="Petit M.A."/>
            <person name="Pichon C."/>
            <person name="Rouy Z."/>
            <person name="Ruf C.S."/>
            <person name="Schneider D."/>
            <person name="Tourret J."/>
            <person name="Vacherie B."/>
            <person name="Vallenet D."/>
            <person name="Medigue C."/>
            <person name="Rocha E.P.C."/>
            <person name="Denamur E."/>
        </authorList>
    </citation>
    <scope>NUCLEOTIDE SEQUENCE [LARGE SCALE GENOMIC DNA]</scope>
    <source>
        <strain>S88 / ExPEC</strain>
    </source>
</reference>
<feature type="chain" id="PRO_1000197146" description="Trp operon repressor">
    <location>
        <begin position="1"/>
        <end position="108"/>
    </location>
</feature>
<feature type="DNA-binding region" evidence="1">
    <location>
        <begin position="68"/>
        <end position="91"/>
    </location>
</feature>
<sequence>MAQQSPYSAAMAEQRHQEWLRFVDLLKNAYQNDLHLPLLNLMLTPDEREALGTRVRIVEELLRGEMSQRELKNELGAGIATITRGSNSLKAAPVELRQWLEDVLLKSD</sequence>
<comment type="function">
    <text evidence="1">This protein is an aporepressor. When complexed with L-tryptophan it binds the operator region of the trp operon (5'-ACTAGT-'3') and prevents the initiation of transcription. The complex also regulates trp repressor biosynthesis by binding to its regulatory region.</text>
</comment>
<comment type="subunit">
    <text evidence="1">Homodimer.</text>
</comment>
<comment type="subcellular location">
    <subcellularLocation>
        <location evidence="1">Cytoplasm</location>
    </subcellularLocation>
</comment>
<comment type="similarity">
    <text evidence="1">Belongs to the TrpR family.</text>
</comment>
<proteinExistence type="inferred from homology"/>
<accession>B7MNK2</accession>
<dbReference type="EMBL" id="CU928161">
    <property type="protein sequence ID" value="CAR06215.1"/>
    <property type="molecule type" value="Genomic_DNA"/>
</dbReference>
<dbReference type="RefSeq" id="WP_000068677.1">
    <property type="nucleotide sequence ID" value="NC_011742.1"/>
</dbReference>
<dbReference type="SMR" id="B7MNK2"/>
<dbReference type="GeneID" id="89519371"/>
<dbReference type="KEGG" id="ecz:ECS88_5076"/>
<dbReference type="HOGENOM" id="CLU_147939_0_0_6"/>
<dbReference type="Proteomes" id="UP000000747">
    <property type="component" value="Chromosome"/>
</dbReference>
<dbReference type="GO" id="GO:0005737">
    <property type="term" value="C:cytoplasm"/>
    <property type="evidence" value="ECO:0007669"/>
    <property type="project" value="UniProtKB-SubCell"/>
</dbReference>
<dbReference type="GO" id="GO:0003700">
    <property type="term" value="F:DNA-binding transcription factor activity"/>
    <property type="evidence" value="ECO:0007669"/>
    <property type="project" value="InterPro"/>
</dbReference>
<dbReference type="GO" id="GO:0043565">
    <property type="term" value="F:sequence-specific DNA binding"/>
    <property type="evidence" value="ECO:0007669"/>
    <property type="project" value="InterPro"/>
</dbReference>
<dbReference type="GO" id="GO:0045892">
    <property type="term" value="P:negative regulation of DNA-templated transcription"/>
    <property type="evidence" value="ECO:0007669"/>
    <property type="project" value="UniProtKB-UniRule"/>
</dbReference>
<dbReference type="FunFam" id="1.10.1270.10:FF:000001">
    <property type="entry name" value="Trp operon repressor"/>
    <property type="match status" value="1"/>
</dbReference>
<dbReference type="Gene3D" id="1.10.1270.10">
    <property type="entry name" value="TrpR-like"/>
    <property type="match status" value="1"/>
</dbReference>
<dbReference type="HAMAP" id="MF_00475">
    <property type="entry name" value="Trp_repressor"/>
    <property type="match status" value="1"/>
</dbReference>
<dbReference type="InterPro" id="IPR000831">
    <property type="entry name" value="Trp_repress"/>
</dbReference>
<dbReference type="InterPro" id="IPR013335">
    <property type="entry name" value="Trp_repress_bac"/>
</dbReference>
<dbReference type="InterPro" id="IPR010921">
    <property type="entry name" value="Trp_repressor/repl_initiator"/>
</dbReference>
<dbReference type="InterPro" id="IPR038116">
    <property type="entry name" value="TrpR-like_sf"/>
</dbReference>
<dbReference type="NCBIfam" id="TIGR01321">
    <property type="entry name" value="TrpR"/>
    <property type="match status" value="1"/>
</dbReference>
<dbReference type="PANTHER" id="PTHR38025">
    <property type="entry name" value="TRP OPERON REPRESSOR"/>
    <property type="match status" value="1"/>
</dbReference>
<dbReference type="PANTHER" id="PTHR38025:SF1">
    <property type="entry name" value="TRP OPERON REPRESSOR"/>
    <property type="match status" value="1"/>
</dbReference>
<dbReference type="Pfam" id="PF01371">
    <property type="entry name" value="Trp_repressor"/>
    <property type="match status" value="1"/>
</dbReference>
<dbReference type="PIRSF" id="PIRSF003196">
    <property type="entry name" value="Trp_repressor"/>
    <property type="match status" value="1"/>
</dbReference>
<dbReference type="SUPFAM" id="SSF48295">
    <property type="entry name" value="TrpR-like"/>
    <property type="match status" value="1"/>
</dbReference>
<name>TRPR_ECO45</name>
<keyword id="KW-0963">Cytoplasm</keyword>
<keyword id="KW-0238">DNA-binding</keyword>
<keyword id="KW-1185">Reference proteome</keyword>
<keyword id="KW-0678">Repressor</keyword>
<keyword id="KW-0804">Transcription</keyword>
<keyword id="KW-0805">Transcription regulation</keyword>
<organism>
    <name type="scientific">Escherichia coli O45:K1 (strain S88 / ExPEC)</name>
    <dbReference type="NCBI Taxonomy" id="585035"/>
    <lineage>
        <taxon>Bacteria</taxon>
        <taxon>Pseudomonadati</taxon>
        <taxon>Pseudomonadota</taxon>
        <taxon>Gammaproteobacteria</taxon>
        <taxon>Enterobacterales</taxon>
        <taxon>Enterobacteriaceae</taxon>
        <taxon>Escherichia</taxon>
    </lineage>
</organism>
<protein>
    <recommendedName>
        <fullName evidence="1">Trp operon repressor</fullName>
    </recommendedName>
</protein>
<gene>
    <name evidence="1" type="primary">trpR</name>
    <name type="ordered locus">ECS88_5076</name>
</gene>